<feature type="chain" id="PRO_0000094060" description="Uncharacterized protein Rv1488">
    <location>
        <begin position="1"/>
        <end position="381"/>
    </location>
</feature>
<feature type="transmembrane region" description="Helical" evidence="1">
    <location>
        <begin position="3"/>
        <end position="23"/>
    </location>
</feature>
<name>Y1488_MYCTU</name>
<gene>
    <name type="ordered locus">Rv1488</name>
    <name type="ORF">MTCY277.09</name>
</gene>
<keyword id="KW-0472">Membrane</keyword>
<keyword id="KW-1185">Reference proteome</keyword>
<keyword id="KW-0812">Transmembrane</keyword>
<keyword id="KW-1133">Transmembrane helix</keyword>
<comment type="subcellular location">
    <subcellularLocation>
        <location evidence="2">Membrane</location>
        <topology evidence="2">Single-pass membrane protein</topology>
    </subcellularLocation>
</comment>
<comment type="similarity">
    <text evidence="2">Belongs to the band 7/mec-2 family.</text>
</comment>
<organism>
    <name type="scientific">Mycobacterium tuberculosis (strain ATCC 25618 / H37Rv)</name>
    <dbReference type="NCBI Taxonomy" id="83332"/>
    <lineage>
        <taxon>Bacteria</taxon>
        <taxon>Bacillati</taxon>
        <taxon>Actinomycetota</taxon>
        <taxon>Actinomycetes</taxon>
        <taxon>Mycobacteriales</taxon>
        <taxon>Mycobacteriaceae</taxon>
        <taxon>Mycobacterium</taxon>
        <taxon>Mycobacterium tuberculosis complex</taxon>
    </lineage>
</organism>
<proteinExistence type="evidence at protein level"/>
<sequence>MQGAVAGLVFLAVLVIFAIIVVAKSVALIPQAEAAVIERLGRYSRTVSGQLTLLVPFIDRVRARVDLRERVVSFPPQPVITEDNLTLNIDTVVYFQVTVPQAAVYEISNYIVGVEQLTTTTLRNVVGGMTLEQTLTSRDQINAQLRGVLDEATGRWGLRVARVELRSIDPPPSIQASMEKQMKADREKRAMILTAEGTREAAIKQAEGQKQAQILAAEGAKQAAILAAEADRQSRMLRAQGERAAAYLQAQGQAKAIEKTFAAIKAGRPTPEMLAYQYLQTLPEMARGDANKVWVVPSDFNAALQGFTRLLGKPGEDGVFRFEPSPVEDQPKHAADGDDAEVAGWFSTDTDPSIARAVATAEAIARKPVEGSLGTPPRLTQ</sequence>
<evidence type="ECO:0000255" key="1"/>
<evidence type="ECO:0000305" key="2"/>
<reference key="1">
    <citation type="journal article" date="1998" name="Nature">
        <title>Deciphering the biology of Mycobacterium tuberculosis from the complete genome sequence.</title>
        <authorList>
            <person name="Cole S.T."/>
            <person name="Brosch R."/>
            <person name="Parkhill J."/>
            <person name="Garnier T."/>
            <person name="Churcher C.M."/>
            <person name="Harris D.E."/>
            <person name="Gordon S.V."/>
            <person name="Eiglmeier K."/>
            <person name="Gas S."/>
            <person name="Barry C.E. III"/>
            <person name="Tekaia F."/>
            <person name="Badcock K."/>
            <person name="Basham D."/>
            <person name="Brown D."/>
            <person name="Chillingworth T."/>
            <person name="Connor R."/>
            <person name="Davies R.M."/>
            <person name="Devlin K."/>
            <person name="Feltwell T."/>
            <person name="Gentles S."/>
            <person name="Hamlin N."/>
            <person name="Holroyd S."/>
            <person name="Hornsby T."/>
            <person name="Jagels K."/>
            <person name="Krogh A."/>
            <person name="McLean J."/>
            <person name="Moule S."/>
            <person name="Murphy L.D."/>
            <person name="Oliver S."/>
            <person name="Osborne J."/>
            <person name="Quail M.A."/>
            <person name="Rajandream M.A."/>
            <person name="Rogers J."/>
            <person name="Rutter S."/>
            <person name="Seeger K."/>
            <person name="Skelton S."/>
            <person name="Squares S."/>
            <person name="Squares R."/>
            <person name="Sulston J.E."/>
            <person name="Taylor K."/>
            <person name="Whitehead S."/>
            <person name="Barrell B.G."/>
        </authorList>
    </citation>
    <scope>NUCLEOTIDE SEQUENCE [LARGE SCALE GENOMIC DNA]</scope>
    <source>
        <strain>ATCC 25618 / H37Rv</strain>
    </source>
</reference>
<reference key="2">
    <citation type="journal article" date="2011" name="Mol. Cell. Proteomics">
        <title>Proteogenomic analysis of Mycobacterium tuberculosis by high resolution mass spectrometry.</title>
        <authorList>
            <person name="Kelkar D.S."/>
            <person name="Kumar D."/>
            <person name="Kumar P."/>
            <person name="Balakrishnan L."/>
            <person name="Muthusamy B."/>
            <person name="Yadav A.K."/>
            <person name="Shrivastava P."/>
            <person name="Marimuthu A."/>
            <person name="Anand S."/>
            <person name="Sundaram H."/>
            <person name="Kingsbury R."/>
            <person name="Harsha H.C."/>
            <person name="Nair B."/>
            <person name="Prasad T.S."/>
            <person name="Chauhan D.S."/>
            <person name="Katoch K."/>
            <person name="Katoch V.M."/>
            <person name="Kumar P."/>
            <person name="Chaerkady R."/>
            <person name="Ramachandran S."/>
            <person name="Dash D."/>
            <person name="Pandey A."/>
        </authorList>
    </citation>
    <scope>IDENTIFICATION BY MASS SPECTROMETRY [LARGE SCALE ANALYSIS]</scope>
    <source>
        <strain>ATCC 25618 / H37Rv</strain>
    </source>
</reference>
<protein>
    <recommendedName>
        <fullName>Uncharacterized protein Rv1488</fullName>
    </recommendedName>
</protein>
<accession>P9WPR9</accession>
<accession>L0T9S2</accession>
<accession>P63693</accession>
<accession>P71768</accession>
<dbReference type="EMBL" id="AL123456">
    <property type="protein sequence ID" value="CCP44248.1"/>
    <property type="molecule type" value="Genomic_DNA"/>
</dbReference>
<dbReference type="PIR" id="C70711">
    <property type="entry name" value="C70711"/>
</dbReference>
<dbReference type="RefSeq" id="NP_216004.1">
    <property type="nucleotide sequence ID" value="NC_000962.3"/>
</dbReference>
<dbReference type="RefSeq" id="WP_003407571.1">
    <property type="nucleotide sequence ID" value="NZ_NVQJ01000004.1"/>
</dbReference>
<dbReference type="SMR" id="P9WPR9"/>
<dbReference type="STRING" id="83332.Rv1488"/>
<dbReference type="PaxDb" id="83332-Rv1488"/>
<dbReference type="DNASU" id="886515"/>
<dbReference type="GeneID" id="886515"/>
<dbReference type="KEGG" id="mtu:Rv1488"/>
<dbReference type="KEGG" id="mtv:RVBD_1488"/>
<dbReference type="TubercuList" id="Rv1488"/>
<dbReference type="eggNOG" id="COG0330">
    <property type="taxonomic scope" value="Bacteria"/>
</dbReference>
<dbReference type="InParanoid" id="P9WPR9"/>
<dbReference type="OrthoDB" id="9809197at2"/>
<dbReference type="PhylomeDB" id="P9WPR9"/>
<dbReference type="Proteomes" id="UP000001584">
    <property type="component" value="Chromosome"/>
</dbReference>
<dbReference type="GO" id="GO:0005576">
    <property type="term" value="C:extracellular region"/>
    <property type="evidence" value="ECO:0007005"/>
    <property type="project" value="MTBBASE"/>
</dbReference>
<dbReference type="GO" id="GO:0009274">
    <property type="term" value="C:peptidoglycan-based cell wall"/>
    <property type="evidence" value="ECO:0007005"/>
    <property type="project" value="MTBBASE"/>
</dbReference>
<dbReference type="GO" id="GO:0005886">
    <property type="term" value="C:plasma membrane"/>
    <property type="evidence" value="ECO:0007005"/>
    <property type="project" value="MTBBASE"/>
</dbReference>
<dbReference type="CDD" id="cd08829">
    <property type="entry name" value="SPFH_paraslipin"/>
    <property type="match status" value="1"/>
</dbReference>
<dbReference type="FunFam" id="3.30.479.30:FF:000019">
    <property type="entry name" value="Possible exported conserved protein"/>
    <property type="match status" value="1"/>
</dbReference>
<dbReference type="Gene3D" id="3.30.479.30">
    <property type="entry name" value="Band 7 domain"/>
    <property type="match status" value="1"/>
</dbReference>
<dbReference type="InterPro" id="IPR050710">
    <property type="entry name" value="Band7/mec-2_domain"/>
</dbReference>
<dbReference type="InterPro" id="IPR001107">
    <property type="entry name" value="Band_7"/>
</dbReference>
<dbReference type="InterPro" id="IPR036013">
    <property type="entry name" value="Band_7/SPFH_dom_sf"/>
</dbReference>
<dbReference type="InterPro" id="IPR018080">
    <property type="entry name" value="Band_7/stomatin-like_CS"/>
</dbReference>
<dbReference type="InterPro" id="IPR001972">
    <property type="entry name" value="Stomatin_HflK_fam"/>
</dbReference>
<dbReference type="PANTHER" id="PTHR43327">
    <property type="entry name" value="STOMATIN-LIKE PROTEIN 2, MITOCHONDRIAL"/>
    <property type="match status" value="1"/>
</dbReference>
<dbReference type="PANTHER" id="PTHR43327:SF10">
    <property type="entry name" value="STOMATIN-LIKE PROTEIN 2, MITOCHONDRIAL"/>
    <property type="match status" value="1"/>
</dbReference>
<dbReference type="Pfam" id="PF01145">
    <property type="entry name" value="Band_7"/>
    <property type="match status" value="1"/>
</dbReference>
<dbReference type="PRINTS" id="PR00721">
    <property type="entry name" value="STOMATIN"/>
</dbReference>
<dbReference type="SMART" id="SM00244">
    <property type="entry name" value="PHB"/>
    <property type="match status" value="1"/>
</dbReference>
<dbReference type="SUPFAM" id="SSF117892">
    <property type="entry name" value="Band 7/SPFH domain"/>
    <property type="match status" value="1"/>
</dbReference>
<dbReference type="PROSITE" id="PS01270">
    <property type="entry name" value="BAND_7"/>
    <property type="match status" value="1"/>
</dbReference>